<dbReference type="EMBL" id="AE005674">
    <property type="protein sequence ID" value="AAN42778.1"/>
    <property type="molecule type" value="Genomic_DNA"/>
</dbReference>
<dbReference type="EMBL" id="AE014073">
    <property type="protein sequence ID" value="AAP16670.1"/>
    <property type="molecule type" value="Genomic_DNA"/>
</dbReference>
<dbReference type="RefSeq" id="NP_707071.1">
    <property type="nucleotide sequence ID" value="NC_004337.2"/>
</dbReference>
<dbReference type="RefSeq" id="WP_000101055.1">
    <property type="nucleotide sequence ID" value="NZ_WPGW01000222.1"/>
</dbReference>
<dbReference type="SMR" id="P0AEZ6"/>
<dbReference type="STRING" id="198214.SF1162"/>
<dbReference type="PaxDb" id="198214-SF1162"/>
<dbReference type="DNASU" id="1077641"/>
<dbReference type="GeneID" id="1024099"/>
<dbReference type="GeneID" id="93776259"/>
<dbReference type="KEGG" id="sfl:SF1162"/>
<dbReference type="KEGG" id="sfx:S1248"/>
<dbReference type="PATRIC" id="fig|198214.7.peg.1372"/>
<dbReference type="HOGENOM" id="CLU_037612_0_1_6"/>
<dbReference type="Proteomes" id="UP000001006">
    <property type="component" value="Chromosome"/>
</dbReference>
<dbReference type="Proteomes" id="UP000002673">
    <property type="component" value="Chromosome"/>
</dbReference>
<dbReference type="GO" id="GO:0009898">
    <property type="term" value="C:cytoplasmic side of plasma membrane"/>
    <property type="evidence" value="ECO:0007669"/>
    <property type="project" value="TreeGrafter"/>
</dbReference>
<dbReference type="GO" id="GO:0005829">
    <property type="term" value="C:cytosol"/>
    <property type="evidence" value="ECO:0007669"/>
    <property type="project" value="TreeGrafter"/>
</dbReference>
<dbReference type="GO" id="GO:0005524">
    <property type="term" value="F:ATP binding"/>
    <property type="evidence" value="ECO:0007669"/>
    <property type="project" value="UniProtKB-KW"/>
</dbReference>
<dbReference type="GO" id="GO:0016887">
    <property type="term" value="F:ATP hydrolysis activity"/>
    <property type="evidence" value="ECO:0007669"/>
    <property type="project" value="InterPro"/>
</dbReference>
<dbReference type="GO" id="GO:0000917">
    <property type="term" value="P:division septum assembly"/>
    <property type="evidence" value="ECO:0007669"/>
    <property type="project" value="UniProtKB-KW"/>
</dbReference>
<dbReference type="GO" id="GO:0051782">
    <property type="term" value="P:negative regulation of cell division"/>
    <property type="evidence" value="ECO:0007669"/>
    <property type="project" value="TreeGrafter"/>
</dbReference>
<dbReference type="CDD" id="cd02036">
    <property type="entry name" value="MinD"/>
    <property type="match status" value="1"/>
</dbReference>
<dbReference type="FunFam" id="3.40.50.300:FF:000068">
    <property type="entry name" value="Site-determining protein"/>
    <property type="match status" value="1"/>
</dbReference>
<dbReference type="Gene3D" id="3.40.50.300">
    <property type="entry name" value="P-loop containing nucleotide triphosphate hydrolases"/>
    <property type="match status" value="1"/>
</dbReference>
<dbReference type="InterPro" id="IPR002586">
    <property type="entry name" value="CobQ/CobB/MinD/ParA_Nub-bd_dom"/>
</dbReference>
<dbReference type="InterPro" id="IPR010223">
    <property type="entry name" value="MinD"/>
</dbReference>
<dbReference type="InterPro" id="IPR025501">
    <property type="entry name" value="MinD_FleN"/>
</dbReference>
<dbReference type="InterPro" id="IPR027417">
    <property type="entry name" value="P-loop_NTPase"/>
</dbReference>
<dbReference type="InterPro" id="IPR050625">
    <property type="entry name" value="ParA/MinD_ATPase"/>
</dbReference>
<dbReference type="NCBIfam" id="TIGR01968">
    <property type="entry name" value="minD_bact"/>
    <property type="match status" value="1"/>
</dbReference>
<dbReference type="NCBIfam" id="NF008079">
    <property type="entry name" value="PRK10818.1"/>
    <property type="match status" value="1"/>
</dbReference>
<dbReference type="PANTHER" id="PTHR43384:SF6">
    <property type="entry name" value="SEPTUM SITE-DETERMINING PROTEIN MIND HOMOLOG, CHLOROPLASTIC"/>
    <property type="match status" value="1"/>
</dbReference>
<dbReference type="PANTHER" id="PTHR43384">
    <property type="entry name" value="SEPTUM SITE-DETERMINING PROTEIN MIND HOMOLOG, CHLOROPLASTIC-RELATED"/>
    <property type="match status" value="1"/>
</dbReference>
<dbReference type="Pfam" id="PF01656">
    <property type="entry name" value="CbiA"/>
    <property type="match status" value="1"/>
</dbReference>
<dbReference type="PIRSF" id="PIRSF003092">
    <property type="entry name" value="MinD"/>
    <property type="match status" value="1"/>
</dbReference>
<dbReference type="SUPFAM" id="SSF52540">
    <property type="entry name" value="P-loop containing nucleoside triphosphate hydrolases"/>
    <property type="match status" value="1"/>
</dbReference>
<name>MIND_SHIFL</name>
<gene>
    <name type="primary">minD</name>
    <name type="ordered locus">SF1162</name>
    <name type="ordered locus">S1248</name>
</gene>
<proteinExistence type="inferred from homology"/>
<evidence type="ECO:0000250" key="1"/>
<evidence type="ECO:0000250" key="2">
    <source>
        <dbReference type="UniProtKB" id="Q72H90"/>
    </source>
</evidence>
<evidence type="ECO:0000305" key="3"/>
<reference key="1">
    <citation type="journal article" date="2002" name="Nucleic Acids Res.">
        <title>Genome sequence of Shigella flexneri 2a: insights into pathogenicity through comparison with genomes of Escherichia coli K12 and O157.</title>
        <authorList>
            <person name="Jin Q."/>
            <person name="Yuan Z."/>
            <person name="Xu J."/>
            <person name="Wang Y."/>
            <person name="Shen Y."/>
            <person name="Lu W."/>
            <person name="Wang J."/>
            <person name="Liu H."/>
            <person name="Yang J."/>
            <person name="Yang F."/>
            <person name="Zhang X."/>
            <person name="Zhang J."/>
            <person name="Yang G."/>
            <person name="Wu H."/>
            <person name="Qu D."/>
            <person name="Dong J."/>
            <person name="Sun L."/>
            <person name="Xue Y."/>
            <person name="Zhao A."/>
            <person name="Gao Y."/>
            <person name="Zhu J."/>
            <person name="Kan B."/>
            <person name="Ding K."/>
            <person name="Chen S."/>
            <person name="Cheng H."/>
            <person name="Yao Z."/>
            <person name="He B."/>
            <person name="Chen R."/>
            <person name="Ma D."/>
            <person name="Qiang B."/>
            <person name="Wen Y."/>
            <person name="Hou Y."/>
            <person name="Yu J."/>
        </authorList>
    </citation>
    <scope>NUCLEOTIDE SEQUENCE [LARGE SCALE GENOMIC DNA]</scope>
    <source>
        <strain>301 / Serotype 2a</strain>
    </source>
</reference>
<reference key="2">
    <citation type="journal article" date="2003" name="Infect. Immun.">
        <title>Complete genome sequence and comparative genomics of Shigella flexneri serotype 2a strain 2457T.</title>
        <authorList>
            <person name="Wei J."/>
            <person name="Goldberg M.B."/>
            <person name="Burland V."/>
            <person name="Venkatesan M.M."/>
            <person name="Deng W."/>
            <person name="Fournier G."/>
            <person name="Mayhew G.F."/>
            <person name="Plunkett G. III"/>
            <person name="Rose D.J."/>
            <person name="Darling A."/>
            <person name="Mau B."/>
            <person name="Perna N.T."/>
            <person name="Payne S.M."/>
            <person name="Runyen-Janecky L.J."/>
            <person name="Zhou S."/>
            <person name="Schwartz D.C."/>
            <person name="Blattner F.R."/>
        </authorList>
    </citation>
    <scope>NUCLEOTIDE SEQUENCE [LARGE SCALE GENOMIC DNA]</scope>
    <source>
        <strain>ATCC 700930 / 2457T / Serotype 2a</strain>
    </source>
</reference>
<accession>P0AEZ6</accession>
<accession>P18197</accession>
<protein>
    <recommendedName>
        <fullName>Septum site-determining protein MinD</fullName>
    </recommendedName>
    <alternativeName>
        <fullName>Cell division inhibitor MinD</fullName>
    </alternativeName>
</protein>
<sequence length="270" mass="29614">MARIIVVTSGKGGVGKTTSSAAIATGLAQKGKKTVVIDFDIGLRNLDLIMGCERRVVYDFVNVIQGDATLNQALIKDKRTENLYILPASQTRDKDALTREGVAKVLDDLKAMDFEFIVCDSPAGIETGALMALYFADEAIITTNPEVSSVRDSDRILGILASKSRRAENGEEPIKEHLLLTRYNPGRVSRGDMLSMEDVLEILRIKLVGVIPEDQSVLRASNQGEPVILDINADAGKAYADTVERLLGEERPFRFIEEEKKGFLKRLFGG</sequence>
<organism>
    <name type="scientific">Shigella flexneri</name>
    <dbReference type="NCBI Taxonomy" id="623"/>
    <lineage>
        <taxon>Bacteria</taxon>
        <taxon>Pseudomonadati</taxon>
        <taxon>Pseudomonadota</taxon>
        <taxon>Gammaproteobacteria</taxon>
        <taxon>Enterobacterales</taxon>
        <taxon>Enterobacteriaceae</taxon>
        <taxon>Shigella</taxon>
    </lineage>
</organism>
<feature type="initiator methionine" description="Removed" evidence="1">
    <location>
        <position position="1"/>
    </location>
</feature>
<feature type="chain" id="PRO_0000201973" description="Septum site-determining protein MinD">
    <location>
        <begin position="2"/>
        <end position="270"/>
    </location>
</feature>
<feature type="binding site" evidence="2">
    <location>
        <begin position="11"/>
        <end position="18"/>
    </location>
    <ligand>
        <name>ATP</name>
        <dbReference type="ChEBI" id="CHEBI:30616"/>
    </ligand>
</feature>
<comment type="function">
    <text evidence="1">ATPase required for the correct placement of the division site. Cell division inhibitors MinC and MinD act in concert to form an inhibitor capable of blocking formation of the polar Z ring septums. Rapidly oscillates between the poles of the cell to destabilize FtsZ filaments that have formed before they mature into polar Z rings (By similarity).</text>
</comment>
<comment type="subunit">
    <text evidence="1">Interacts with MinC and FtsZ.</text>
</comment>
<comment type="subcellular location">
    <subcellularLocation>
        <location evidence="1">Cell inner membrane</location>
        <topology evidence="1">Peripheral membrane protein</topology>
    </subcellularLocation>
</comment>
<comment type="similarity">
    <text evidence="3">Belongs to the ParA family. MinD subfamily.</text>
</comment>
<keyword id="KW-0067">ATP-binding</keyword>
<keyword id="KW-0131">Cell cycle</keyword>
<keyword id="KW-0132">Cell division</keyword>
<keyword id="KW-0997">Cell inner membrane</keyword>
<keyword id="KW-1003">Cell membrane</keyword>
<keyword id="KW-0472">Membrane</keyword>
<keyword id="KW-0547">Nucleotide-binding</keyword>
<keyword id="KW-1185">Reference proteome</keyword>
<keyword id="KW-0717">Septation</keyword>